<comment type="function">
    <text evidence="1">Catalyzes the transfer of the diacylglyceryl group from phosphatidylglycerol to the sulfhydryl group of the N-terminal cysteine of a prolipoprotein, the first step in the formation of mature lipoproteins.</text>
</comment>
<comment type="catalytic activity">
    <reaction evidence="1">
        <text>L-cysteinyl-[prolipoprotein] + a 1,2-diacyl-sn-glycero-3-phospho-(1'-sn-glycerol) = an S-1,2-diacyl-sn-glyceryl-L-cysteinyl-[prolipoprotein] + sn-glycerol 1-phosphate + H(+)</text>
        <dbReference type="Rhea" id="RHEA:56712"/>
        <dbReference type="Rhea" id="RHEA-COMP:14679"/>
        <dbReference type="Rhea" id="RHEA-COMP:14680"/>
        <dbReference type="ChEBI" id="CHEBI:15378"/>
        <dbReference type="ChEBI" id="CHEBI:29950"/>
        <dbReference type="ChEBI" id="CHEBI:57685"/>
        <dbReference type="ChEBI" id="CHEBI:64716"/>
        <dbReference type="ChEBI" id="CHEBI:140658"/>
        <dbReference type="EC" id="2.5.1.145"/>
    </reaction>
</comment>
<comment type="pathway">
    <text evidence="1">Protein modification; lipoprotein biosynthesis (diacylglyceryl transfer).</text>
</comment>
<comment type="subcellular location">
    <subcellularLocation>
        <location evidence="1">Cell inner membrane</location>
        <topology evidence="1">Multi-pass membrane protein</topology>
    </subcellularLocation>
</comment>
<comment type="similarity">
    <text evidence="1">Belongs to the Lgt family.</text>
</comment>
<feature type="chain" id="PRO_0000172697" description="Phosphatidylglycerol--prolipoprotein diacylglyceryl transferase">
    <location>
        <begin position="1"/>
        <end position="268"/>
    </location>
</feature>
<feature type="transmembrane region" description="Helical" evidence="1">
    <location>
        <begin position="16"/>
        <end position="36"/>
    </location>
</feature>
<feature type="transmembrane region" description="Helical" evidence="1">
    <location>
        <begin position="56"/>
        <end position="76"/>
    </location>
</feature>
<feature type="transmembrane region" description="Helical" evidence="1">
    <location>
        <begin position="92"/>
        <end position="112"/>
    </location>
</feature>
<feature type="transmembrane region" description="Helical" evidence="1">
    <location>
        <begin position="175"/>
        <end position="195"/>
    </location>
</feature>
<feature type="transmembrane region" description="Helical" evidence="1">
    <location>
        <begin position="204"/>
        <end position="224"/>
    </location>
</feature>
<feature type="transmembrane region" description="Helical" evidence="1">
    <location>
        <begin position="236"/>
        <end position="256"/>
    </location>
</feature>
<feature type="binding site" evidence="1">
    <location>
        <position position="136"/>
    </location>
    <ligand>
        <name>a 1,2-diacyl-sn-glycero-3-phospho-(1'-sn-glycerol)</name>
        <dbReference type="ChEBI" id="CHEBI:64716"/>
    </ligand>
</feature>
<organism>
    <name type="scientific">Thermosynechococcus vestitus (strain NIES-2133 / IAM M-273 / BP-1)</name>
    <dbReference type="NCBI Taxonomy" id="197221"/>
    <lineage>
        <taxon>Bacteria</taxon>
        <taxon>Bacillati</taxon>
        <taxon>Cyanobacteriota</taxon>
        <taxon>Cyanophyceae</taxon>
        <taxon>Acaryochloridales</taxon>
        <taxon>Thermosynechococcaceae</taxon>
        <taxon>Thermosynechococcus</taxon>
    </lineage>
</organism>
<protein>
    <recommendedName>
        <fullName evidence="1">Phosphatidylglycerol--prolipoprotein diacylglyceryl transferase</fullName>
        <ecNumber evidence="1">2.5.1.145</ecNumber>
    </recommendedName>
</protein>
<proteinExistence type="inferred from homology"/>
<accession>Q8DH03</accession>
<reference key="1">
    <citation type="journal article" date="2002" name="DNA Res.">
        <title>Complete genome structure of the thermophilic cyanobacterium Thermosynechococcus elongatus BP-1.</title>
        <authorList>
            <person name="Nakamura Y."/>
            <person name="Kaneko T."/>
            <person name="Sato S."/>
            <person name="Ikeuchi M."/>
            <person name="Katoh H."/>
            <person name="Sasamoto S."/>
            <person name="Watanabe A."/>
            <person name="Iriguchi M."/>
            <person name="Kawashima K."/>
            <person name="Kimura T."/>
            <person name="Kishida Y."/>
            <person name="Kiyokawa C."/>
            <person name="Kohara M."/>
            <person name="Matsumoto M."/>
            <person name="Matsuno A."/>
            <person name="Nakazaki N."/>
            <person name="Shimpo S."/>
            <person name="Sugimoto M."/>
            <person name="Takeuchi C."/>
            <person name="Yamada M."/>
            <person name="Tabata S."/>
        </authorList>
    </citation>
    <scope>NUCLEOTIDE SEQUENCE [LARGE SCALE GENOMIC DNA]</scope>
    <source>
        <strain>NIES-2133 / IAM M-273 / BP-1</strain>
    </source>
</reference>
<evidence type="ECO:0000255" key="1">
    <source>
        <dbReference type="HAMAP-Rule" id="MF_01147"/>
    </source>
</evidence>
<keyword id="KW-0997">Cell inner membrane</keyword>
<keyword id="KW-1003">Cell membrane</keyword>
<keyword id="KW-0472">Membrane</keyword>
<keyword id="KW-1185">Reference proteome</keyword>
<keyword id="KW-0808">Transferase</keyword>
<keyword id="KW-0812">Transmembrane</keyword>
<keyword id="KW-1133">Transmembrane helix</keyword>
<name>LGT_THEVB</name>
<gene>
    <name evidence="1" type="primary">lgt</name>
    <name type="ordered locus">tll2157</name>
</gene>
<dbReference type="EC" id="2.5.1.145" evidence="1"/>
<dbReference type="EMBL" id="BA000039">
    <property type="protein sequence ID" value="BAC09709.1"/>
    <property type="molecule type" value="Genomic_DNA"/>
</dbReference>
<dbReference type="RefSeq" id="NP_682947.1">
    <property type="nucleotide sequence ID" value="NC_004113.1"/>
</dbReference>
<dbReference type="RefSeq" id="WP_011057991.1">
    <property type="nucleotide sequence ID" value="NC_004113.1"/>
</dbReference>
<dbReference type="SMR" id="Q8DH03"/>
<dbReference type="STRING" id="197221.gene:10748768"/>
<dbReference type="EnsemblBacteria" id="BAC09709">
    <property type="protein sequence ID" value="BAC09709"/>
    <property type="gene ID" value="BAC09709"/>
</dbReference>
<dbReference type="KEGG" id="tel:tll2157"/>
<dbReference type="PATRIC" id="fig|197221.4.peg.2260"/>
<dbReference type="eggNOG" id="COG0682">
    <property type="taxonomic scope" value="Bacteria"/>
</dbReference>
<dbReference type="UniPathway" id="UPA00664"/>
<dbReference type="Proteomes" id="UP000000440">
    <property type="component" value="Chromosome"/>
</dbReference>
<dbReference type="GO" id="GO:0005886">
    <property type="term" value="C:plasma membrane"/>
    <property type="evidence" value="ECO:0007669"/>
    <property type="project" value="UniProtKB-SubCell"/>
</dbReference>
<dbReference type="GO" id="GO:0008961">
    <property type="term" value="F:phosphatidylglycerol-prolipoprotein diacylglyceryl transferase activity"/>
    <property type="evidence" value="ECO:0007669"/>
    <property type="project" value="UniProtKB-UniRule"/>
</dbReference>
<dbReference type="GO" id="GO:0042158">
    <property type="term" value="P:lipoprotein biosynthetic process"/>
    <property type="evidence" value="ECO:0007669"/>
    <property type="project" value="UniProtKB-UniRule"/>
</dbReference>
<dbReference type="HAMAP" id="MF_01147">
    <property type="entry name" value="Lgt"/>
    <property type="match status" value="1"/>
</dbReference>
<dbReference type="InterPro" id="IPR001640">
    <property type="entry name" value="Lgt"/>
</dbReference>
<dbReference type="NCBIfam" id="TIGR00544">
    <property type="entry name" value="lgt"/>
    <property type="match status" value="1"/>
</dbReference>
<dbReference type="PANTHER" id="PTHR30589:SF0">
    <property type="entry name" value="PHOSPHATIDYLGLYCEROL--PROLIPOPROTEIN DIACYLGLYCERYL TRANSFERASE"/>
    <property type="match status" value="1"/>
</dbReference>
<dbReference type="PANTHER" id="PTHR30589">
    <property type="entry name" value="PROLIPOPROTEIN DIACYLGLYCERYL TRANSFERASE"/>
    <property type="match status" value="1"/>
</dbReference>
<dbReference type="Pfam" id="PF01790">
    <property type="entry name" value="LGT"/>
    <property type="match status" value="1"/>
</dbReference>
<dbReference type="PROSITE" id="PS01311">
    <property type="entry name" value="LGT"/>
    <property type="match status" value="1"/>
</dbReference>
<sequence>MIAAFQSPGATLELGFITLRWYGLLIAVAVFIGIWLSQRLARQRQIDPEQIADLSIWLVVAAIPAARLYYVAFNWGFYQKHLDQVVQIWKGGIAIHGAILGGIVAMAIFTYVQRLSFWQVADVVAPSLILGQAIGRWGNFFNSEAFGAPTDLPWKLYIPVPQRPPELINTAYYHPTFLYESLWNVGVFLLLLWLFRQPRYQKPGTLLMVYAIAYSLGRFWIEGLRMDSLMLGPLRIAQVVSLVAIALGSWGLFRLYYQGKPLPDWQTP</sequence>